<protein>
    <recommendedName>
        <fullName evidence="1">Phosphoenolpyruvate carboxylase</fullName>
        <shortName evidence="1">PEPC</shortName>
        <shortName evidence="1">PEPCase</shortName>
        <ecNumber evidence="1">4.1.1.31</ecNumber>
    </recommendedName>
</protein>
<comment type="function">
    <text evidence="1">Forms oxaloacetate, a four-carbon dicarboxylic acid source for the tricarboxylic acid cycle.</text>
</comment>
<comment type="catalytic activity">
    <reaction evidence="1">
        <text>oxaloacetate + phosphate = phosphoenolpyruvate + hydrogencarbonate</text>
        <dbReference type="Rhea" id="RHEA:28370"/>
        <dbReference type="ChEBI" id="CHEBI:16452"/>
        <dbReference type="ChEBI" id="CHEBI:17544"/>
        <dbReference type="ChEBI" id="CHEBI:43474"/>
        <dbReference type="ChEBI" id="CHEBI:58702"/>
        <dbReference type="EC" id="4.1.1.31"/>
    </reaction>
</comment>
<comment type="cofactor">
    <cofactor evidence="1">
        <name>Mg(2+)</name>
        <dbReference type="ChEBI" id="CHEBI:18420"/>
    </cofactor>
</comment>
<comment type="similarity">
    <text evidence="1">Belongs to the PEPCase type 1 family.</text>
</comment>
<proteinExistence type="inferred from homology"/>
<reference key="1">
    <citation type="journal article" date="2010" name="Genome Biol. Evol.">
        <title>Continuing evolution of Burkholderia mallei through genome reduction and large-scale rearrangements.</title>
        <authorList>
            <person name="Losada L."/>
            <person name="Ronning C.M."/>
            <person name="DeShazer D."/>
            <person name="Woods D."/>
            <person name="Fedorova N."/>
            <person name="Kim H.S."/>
            <person name="Shabalina S.A."/>
            <person name="Pearson T.R."/>
            <person name="Brinkac L."/>
            <person name="Tan P."/>
            <person name="Nandi T."/>
            <person name="Crabtree J."/>
            <person name="Badger J."/>
            <person name="Beckstrom-Sternberg S."/>
            <person name="Saqib M."/>
            <person name="Schutzer S.E."/>
            <person name="Keim P."/>
            <person name="Nierman W.C."/>
        </authorList>
    </citation>
    <scope>NUCLEOTIDE SEQUENCE [LARGE SCALE GENOMIC DNA]</scope>
    <source>
        <strain>NCTC 10229</strain>
    </source>
</reference>
<organism>
    <name type="scientific">Burkholderia mallei (strain NCTC 10229)</name>
    <dbReference type="NCBI Taxonomy" id="412022"/>
    <lineage>
        <taxon>Bacteria</taxon>
        <taxon>Pseudomonadati</taxon>
        <taxon>Pseudomonadota</taxon>
        <taxon>Betaproteobacteria</taxon>
        <taxon>Burkholderiales</taxon>
        <taxon>Burkholderiaceae</taxon>
        <taxon>Burkholderia</taxon>
        <taxon>pseudomallei group</taxon>
    </lineage>
</organism>
<feature type="chain" id="PRO_1000025550" description="Phosphoenolpyruvate carboxylase">
    <location>
        <begin position="1"/>
        <end position="994"/>
    </location>
</feature>
<feature type="region of interest" description="Disordered" evidence="2">
    <location>
        <begin position="1"/>
        <end position="66"/>
    </location>
</feature>
<feature type="compositionally biased region" description="Low complexity" evidence="2">
    <location>
        <begin position="14"/>
        <end position="25"/>
    </location>
</feature>
<feature type="compositionally biased region" description="Low complexity" evidence="2">
    <location>
        <begin position="41"/>
        <end position="54"/>
    </location>
</feature>
<feature type="active site" evidence="1">
    <location>
        <position position="204"/>
    </location>
</feature>
<feature type="active site" evidence="1">
    <location>
        <position position="646"/>
    </location>
</feature>
<dbReference type="EC" id="4.1.1.31" evidence="1"/>
<dbReference type="EMBL" id="CP000546">
    <property type="protein sequence ID" value="ABN03567.1"/>
    <property type="molecule type" value="Genomic_DNA"/>
</dbReference>
<dbReference type="RefSeq" id="WP_004191560.1">
    <property type="nucleotide sequence ID" value="NC_008836.1"/>
</dbReference>
<dbReference type="SMR" id="A2SAH4"/>
<dbReference type="GeneID" id="93059514"/>
<dbReference type="KEGG" id="bml:BMA10229_A2999"/>
<dbReference type="HOGENOM" id="CLU_006557_2_0_4"/>
<dbReference type="Proteomes" id="UP000002283">
    <property type="component" value="Chromosome I"/>
</dbReference>
<dbReference type="GO" id="GO:0005829">
    <property type="term" value="C:cytosol"/>
    <property type="evidence" value="ECO:0007669"/>
    <property type="project" value="TreeGrafter"/>
</dbReference>
<dbReference type="GO" id="GO:0000287">
    <property type="term" value="F:magnesium ion binding"/>
    <property type="evidence" value="ECO:0007669"/>
    <property type="project" value="UniProtKB-UniRule"/>
</dbReference>
<dbReference type="GO" id="GO:0008964">
    <property type="term" value="F:phosphoenolpyruvate carboxylase activity"/>
    <property type="evidence" value="ECO:0007669"/>
    <property type="project" value="UniProtKB-UniRule"/>
</dbReference>
<dbReference type="GO" id="GO:0015977">
    <property type="term" value="P:carbon fixation"/>
    <property type="evidence" value="ECO:0007669"/>
    <property type="project" value="UniProtKB-UniRule"/>
</dbReference>
<dbReference type="GO" id="GO:0006107">
    <property type="term" value="P:oxaloacetate metabolic process"/>
    <property type="evidence" value="ECO:0007669"/>
    <property type="project" value="UniProtKB-UniRule"/>
</dbReference>
<dbReference type="GO" id="GO:0006099">
    <property type="term" value="P:tricarboxylic acid cycle"/>
    <property type="evidence" value="ECO:0007669"/>
    <property type="project" value="InterPro"/>
</dbReference>
<dbReference type="Gene3D" id="1.20.1440.90">
    <property type="entry name" value="Phosphoenolpyruvate/pyruvate domain"/>
    <property type="match status" value="1"/>
</dbReference>
<dbReference type="HAMAP" id="MF_00595">
    <property type="entry name" value="PEPcase_type1"/>
    <property type="match status" value="1"/>
</dbReference>
<dbReference type="InterPro" id="IPR021135">
    <property type="entry name" value="PEP_COase"/>
</dbReference>
<dbReference type="InterPro" id="IPR022805">
    <property type="entry name" value="PEP_COase_bac/pln-type"/>
</dbReference>
<dbReference type="InterPro" id="IPR018129">
    <property type="entry name" value="PEP_COase_Lys_AS"/>
</dbReference>
<dbReference type="InterPro" id="IPR033129">
    <property type="entry name" value="PEPCASE_His_AS"/>
</dbReference>
<dbReference type="InterPro" id="IPR015813">
    <property type="entry name" value="Pyrv/PenolPyrv_kinase-like_dom"/>
</dbReference>
<dbReference type="NCBIfam" id="NF000584">
    <property type="entry name" value="PRK00009.1"/>
    <property type="match status" value="1"/>
</dbReference>
<dbReference type="PANTHER" id="PTHR30523">
    <property type="entry name" value="PHOSPHOENOLPYRUVATE CARBOXYLASE"/>
    <property type="match status" value="1"/>
</dbReference>
<dbReference type="PANTHER" id="PTHR30523:SF6">
    <property type="entry name" value="PHOSPHOENOLPYRUVATE CARBOXYLASE"/>
    <property type="match status" value="1"/>
</dbReference>
<dbReference type="Pfam" id="PF00311">
    <property type="entry name" value="PEPcase"/>
    <property type="match status" value="1"/>
</dbReference>
<dbReference type="PRINTS" id="PR00150">
    <property type="entry name" value="PEPCARBXLASE"/>
</dbReference>
<dbReference type="SUPFAM" id="SSF51621">
    <property type="entry name" value="Phosphoenolpyruvate/pyruvate domain"/>
    <property type="match status" value="1"/>
</dbReference>
<dbReference type="PROSITE" id="PS00781">
    <property type="entry name" value="PEPCASE_1"/>
    <property type="match status" value="1"/>
</dbReference>
<dbReference type="PROSITE" id="PS00393">
    <property type="entry name" value="PEPCASE_2"/>
    <property type="match status" value="1"/>
</dbReference>
<gene>
    <name evidence="1" type="primary">ppc</name>
    <name type="ordered locus">BMA10229_A2999</name>
</gene>
<name>CAPP_BURM9</name>
<accession>A2SAH4</accession>
<evidence type="ECO:0000255" key="1">
    <source>
        <dbReference type="HAMAP-Rule" id="MF_00595"/>
    </source>
</evidence>
<evidence type="ECO:0000256" key="2">
    <source>
        <dbReference type="SAM" id="MobiDB-lite"/>
    </source>
</evidence>
<sequence length="994" mass="108735">MKSSGSARATRRNAVSSSSAPAHAEPPARRAAKPARKLDGAAARPLAPTNAASAKPQGRTREDKDRPLFEDIRYLGRLLGDVVREQEGDAVFDVVETIRQTAVKFRREDDKAAAQTLEKMLRKLTPEQTVSVVRAFSYFSHLANIAEDRHHNRRRRIHALAGSAAQAGTVAYALDKLKQAGDASSKTIKQFFEGALIVPVLTAHPTEVQRKSILDAQHDIARLLAERDQPLTARELAHNEALLRARVTTLWQTRMLRDARLTVADEIENALSYYRATFLDELPALYADIEEALAEHGLRARVPAFFQMGSWIGGDRDGNPNVTAATLDEAISRQAAVIFEHYLEQVHKLGAELSVSNLLVGASDALKALAAASPDQSPHRVDEPYRRALIGVYTRLAASARVRLGEGTVPVRSAGRGAAPVRATPYADAEEFAADLRVLTDSLALHHGESLATPRLAPLMRAAEVFGFHLASIDLRQSSDIHEAVVAELLARGGVEADYAALPEADKLRVLLAALADPRPLRSPYLDYSDLAKSELGVLERAHAIRAQFGARAVRNYIISHTETVSDLVEVLLLQKETGLFEGTLGTPHANARNGLMVIPLFETIADLRNASDIMRAFFALPGVGELLAHQGHEQEVMLGYSDSNKDGGFLTSNWELYRAELALVDLFDERGIKLRLFHGRGGTVGRGGGPTYQAILSQPPGTVNGQIRLTEQGEVIASKFANPEIGRRNLETVVAATLEATLAPHSNAPKQLPAFEAAMQTLSDAAMASYRALVYETPGFTDYFFSSTPITEIAELNIGSRPASRKLQDPKNRKIEDLRAIPWGFSWGQCRLLLTGWYGFGSAVAAYLDGAPDAAERGKRVALLKKMNKTWPFFANLLSNMDMVLAKTDLAVASRYAQLVADKKLRKHVFERIVAEWHRTADALAEITGAHARLAANPLLARSIKNRFPYLDPLNHLQVELIKRHRAGDTNARLRRGIHLTINGIAAGLRNTG</sequence>
<keyword id="KW-0120">Carbon dioxide fixation</keyword>
<keyword id="KW-0456">Lyase</keyword>
<keyword id="KW-0460">Magnesium</keyword>